<accession>B2S6Q4</accession>
<reference key="1">
    <citation type="journal article" date="2008" name="PLoS ONE">
        <title>Genome sequence of Brucella abortus vaccine strain S19 compared to virulent strains yields candidate virulence genes.</title>
        <authorList>
            <person name="Crasta O.R."/>
            <person name="Folkerts O."/>
            <person name="Fei Z."/>
            <person name="Mane S.P."/>
            <person name="Evans C."/>
            <person name="Martino-Catt S."/>
            <person name="Bricker B."/>
            <person name="Yu G."/>
            <person name="Du L."/>
            <person name="Sobral B.W."/>
        </authorList>
    </citation>
    <scope>NUCLEOTIDE SEQUENCE [LARGE SCALE GENOMIC DNA]</scope>
    <source>
        <strain>S19</strain>
    </source>
</reference>
<protein>
    <recommendedName>
        <fullName evidence="1">UDP-N-acetylglucosamine--N-acetylmuramyl-(pentapeptide) pyrophosphoryl-undecaprenol N-acetylglucosamine transferase</fullName>
        <ecNumber evidence="1">2.4.1.227</ecNumber>
    </recommendedName>
    <alternativeName>
        <fullName evidence="1">Undecaprenyl-PP-MurNAc-pentapeptide-UDPGlcNAc GlcNAc transferase</fullName>
    </alternativeName>
</protein>
<feature type="chain" id="PRO_1000090408" description="UDP-N-acetylglucosamine--N-acetylmuramyl-(pentapeptide) pyrophosphoryl-undecaprenol N-acetylglucosamine transferase">
    <location>
        <begin position="1"/>
        <end position="379"/>
    </location>
</feature>
<feature type="binding site" evidence="1">
    <location>
        <begin position="17"/>
        <end position="19"/>
    </location>
    <ligand>
        <name>UDP-N-acetyl-alpha-D-glucosamine</name>
        <dbReference type="ChEBI" id="CHEBI:57705"/>
    </ligand>
</feature>
<feature type="binding site" evidence="1">
    <location>
        <position position="128"/>
    </location>
    <ligand>
        <name>UDP-N-acetyl-alpha-D-glucosamine</name>
        <dbReference type="ChEBI" id="CHEBI:57705"/>
    </ligand>
</feature>
<feature type="binding site" evidence="1">
    <location>
        <position position="169"/>
    </location>
    <ligand>
        <name>UDP-N-acetyl-alpha-D-glucosamine</name>
        <dbReference type="ChEBI" id="CHEBI:57705"/>
    </ligand>
</feature>
<feature type="binding site" evidence="1">
    <location>
        <position position="197"/>
    </location>
    <ligand>
        <name>UDP-N-acetyl-alpha-D-glucosamine</name>
        <dbReference type="ChEBI" id="CHEBI:57705"/>
    </ligand>
</feature>
<feature type="binding site" evidence="1">
    <location>
        <position position="298"/>
    </location>
    <ligand>
        <name>UDP-N-acetyl-alpha-D-glucosamine</name>
        <dbReference type="ChEBI" id="CHEBI:57705"/>
    </ligand>
</feature>
<sequence length="379" mass="40198">MDNLANQGVIVLAAGGTGGHLFPAEALAHELRARGWDVHLATDARAQRFVGAFAQDHVHVIRSATIAGRNPVALLKTFWSLWQGNLDSRKLFRRLKPKLVVGFGGYPTLPPLYAASNMGIPTLIHEQNAVMGRANKGLAGRVKAIAGGFLPENSGAYAAKTVITGNPVRSPVLVAAATPYTPAGKDDRFRLLVFGGSQGAQFFSQAIPAAVALLPEHERARLLITQQARKEDEASARQAYEKLGVPADVAPFFNDMPARMADAHFVIARSGASTVSEITVIGRPAMLVPFPHALDHDQAANAAALAAAGGAEVVRQADLSPQRLAEMLQSAMNEPERLEQQAKAAKSVGKPDAARLLADLAEAIASGKTVQEFKEGNRP</sequence>
<dbReference type="EC" id="2.4.1.227" evidence="1"/>
<dbReference type="EMBL" id="CP000887">
    <property type="protein sequence ID" value="ACD72851.1"/>
    <property type="molecule type" value="Genomic_DNA"/>
</dbReference>
<dbReference type="RefSeq" id="WP_002964539.1">
    <property type="nucleotide sequence ID" value="NC_010742.1"/>
</dbReference>
<dbReference type="SMR" id="B2S6Q4"/>
<dbReference type="CAZy" id="GT28">
    <property type="family name" value="Glycosyltransferase Family 28"/>
</dbReference>
<dbReference type="GeneID" id="93016271"/>
<dbReference type="KEGG" id="bmc:BAbS19_I13560"/>
<dbReference type="HOGENOM" id="CLU_037404_2_1_5"/>
<dbReference type="UniPathway" id="UPA00219"/>
<dbReference type="Proteomes" id="UP000002565">
    <property type="component" value="Chromosome 1"/>
</dbReference>
<dbReference type="GO" id="GO:0005886">
    <property type="term" value="C:plasma membrane"/>
    <property type="evidence" value="ECO:0007669"/>
    <property type="project" value="UniProtKB-SubCell"/>
</dbReference>
<dbReference type="GO" id="GO:0051991">
    <property type="term" value="F:UDP-N-acetyl-D-glucosamine:N-acetylmuramoyl-L-alanyl-D-glutamyl-meso-2,6-diaminopimelyl-D-alanyl-D-alanine-diphosphoundecaprenol 4-beta-N-acetylglucosaminlytransferase activity"/>
    <property type="evidence" value="ECO:0007669"/>
    <property type="project" value="RHEA"/>
</dbReference>
<dbReference type="GO" id="GO:0050511">
    <property type="term" value="F:undecaprenyldiphospho-muramoylpentapeptide beta-N-acetylglucosaminyltransferase activity"/>
    <property type="evidence" value="ECO:0007669"/>
    <property type="project" value="UniProtKB-UniRule"/>
</dbReference>
<dbReference type="GO" id="GO:0005975">
    <property type="term" value="P:carbohydrate metabolic process"/>
    <property type="evidence" value="ECO:0007669"/>
    <property type="project" value="InterPro"/>
</dbReference>
<dbReference type="GO" id="GO:0051301">
    <property type="term" value="P:cell division"/>
    <property type="evidence" value="ECO:0007669"/>
    <property type="project" value="UniProtKB-KW"/>
</dbReference>
<dbReference type="GO" id="GO:0071555">
    <property type="term" value="P:cell wall organization"/>
    <property type="evidence" value="ECO:0007669"/>
    <property type="project" value="UniProtKB-KW"/>
</dbReference>
<dbReference type="GO" id="GO:0030259">
    <property type="term" value="P:lipid glycosylation"/>
    <property type="evidence" value="ECO:0007669"/>
    <property type="project" value="UniProtKB-UniRule"/>
</dbReference>
<dbReference type="GO" id="GO:0009252">
    <property type="term" value="P:peptidoglycan biosynthetic process"/>
    <property type="evidence" value="ECO:0007669"/>
    <property type="project" value="UniProtKB-UniRule"/>
</dbReference>
<dbReference type="GO" id="GO:0008360">
    <property type="term" value="P:regulation of cell shape"/>
    <property type="evidence" value="ECO:0007669"/>
    <property type="project" value="UniProtKB-KW"/>
</dbReference>
<dbReference type="CDD" id="cd03785">
    <property type="entry name" value="GT28_MurG"/>
    <property type="match status" value="1"/>
</dbReference>
<dbReference type="Gene3D" id="3.40.50.2000">
    <property type="entry name" value="Glycogen Phosphorylase B"/>
    <property type="match status" value="2"/>
</dbReference>
<dbReference type="HAMAP" id="MF_00033">
    <property type="entry name" value="MurG"/>
    <property type="match status" value="1"/>
</dbReference>
<dbReference type="InterPro" id="IPR006009">
    <property type="entry name" value="GlcNAc_MurG"/>
</dbReference>
<dbReference type="InterPro" id="IPR007235">
    <property type="entry name" value="Glyco_trans_28_C"/>
</dbReference>
<dbReference type="InterPro" id="IPR004276">
    <property type="entry name" value="GlycoTrans_28_N"/>
</dbReference>
<dbReference type="NCBIfam" id="TIGR01133">
    <property type="entry name" value="murG"/>
    <property type="match status" value="1"/>
</dbReference>
<dbReference type="PANTHER" id="PTHR21015:SF22">
    <property type="entry name" value="GLYCOSYLTRANSFERASE"/>
    <property type="match status" value="1"/>
</dbReference>
<dbReference type="PANTHER" id="PTHR21015">
    <property type="entry name" value="UDP-N-ACETYLGLUCOSAMINE--N-ACETYLMURAMYL-(PENTAPEPTIDE) PYROPHOSPHORYL-UNDECAPRENOL N-ACETYLGLUCOSAMINE TRANSFERASE 1"/>
    <property type="match status" value="1"/>
</dbReference>
<dbReference type="Pfam" id="PF04101">
    <property type="entry name" value="Glyco_tran_28_C"/>
    <property type="match status" value="1"/>
</dbReference>
<dbReference type="Pfam" id="PF03033">
    <property type="entry name" value="Glyco_transf_28"/>
    <property type="match status" value="1"/>
</dbReference>
<dbReference type="SUPFAM" id="SSF53756">
    <property type="entry name" value="UDP-Glycosyltransferase/glycogen phosphorylase"/>
    <property type="match status" value="1"/>
</dbReference>
<keyword id="KW-0131">Cell cycle</keyword>
<keyword id="KW-0132">Cell division</keyword>
<keyword id="KW-0997">Cell inner membrane</keyword>
<keyword id="KW-1003">Cell membrane</keyword>
<keyword id="KW-0133">Cell shape</keyword>
<keyword id="KW-0961">Cell wall biogenesis/degradation</keyword>
<keyword id="KW-0328">Glycosyltransferase</keyword>
<keyword id="KW-0472">Membrane</keyword>
<keyword id="KW-0573">Peptidoglycan synthesis</keyword>
<keyword id="KW-0808">Transferase</keyword>
<proteinExistence type="inferred from homology"/>
<evidence type="ECO:0000255" key="1">
    <source>
        <dbReference type="HAMAP-Rule" id="MF_00033"/>
    </source>
</evidence>
<comment type="function">
    <text evidence="1">Cell wall formation. Catalyzes the transfer of a GlcNAc subunit on undecaprenyl-pyrophosphoryl-MurNAc-pentapeptide (lipid intermediate I) to form undecaprenyl-pyrophosphoryl-MurNAc-(pentapeptide)GlcNAc (lipid intermediate II).</text>
</comment>
<comment type="catalytic activity">
    <reaction evidence="1">
        <text>di-trans,octa-cis-undecaprenyl diphospho-N-acetyl-alpha-D-muramoyl-L-alanyl-D-glutamyl-meso-2,6-diaminopimeloyl-D-alanyl-D-alanine + UDP-N-acetyl-alpha-D-glucosamine = di-trans,octa-cis-undecaprenyl diphospho-[N-acetyl-alpha-D-glucosaminyl-(1-&gt;4)]-N-acetyl-alpha-D-muramoyl-L-alanyl-D-glutamyl-meso-2,6-diaminopimeloyl-D-alanyl-D-alanine + UDP + H(+)</text>
        <dbReference type="Rhea" id="RHEA:31227"/>
        <dbReference type="ChEBI" id="CHEBI:15378"/>
        <dbReference type="ChEBI" id="CHEBI:57705"/>
        <dbReference type="ChEBI" id="CHEBI:58223"/>
        <dbReference type="ChEBI" id="CHEBI:61387"/>
        <dbReference type="ChEBI" id="CHEBI:61388"/>
        <dbReference type="EC" id="2.4.1.227"/>
    </reaction>
</comment>
<comment type="pathway">
    <text evidence="1">Cell wall biogenesis; peptidoglycan biosynthesis.</text>
</comment>
<comment type="subcellular location">
    <subcellularLocation>
        <location evidence="1">Cell inner membrane</location>
        <topology evidence="1">Peripheral membrane protein</topology>
        <orientation evidence="1">Cytoplasmic side</orientation>
    </subcellularLocation>
</comment>
<comment type="similarity">
    <text evidence="1">Belongs to the glycosyltransferase 28 family. MurG subfamily.</text>
</comment>
<name>MURG_BRUA1</name>
<gene>
    <name evidence="1" type="primary">murG</name>
    <name type="ordered locus">BAbS19_I13560</name>
</gene>
<organism>
    <name type="scientific">Brucella abortus (strain S19)</name>
    <dbReference type="NCBI Taxonomy" id="430066"/>
    <lineage>
        <taxon>Bacteria</taxon>
        <taxon>Pseudomonadati</taxon>
        <taxon>Pseudomonadota</taxon>
        <taxon>Alphaproteobacteria</taxon>
        <taxon>Hyphomicrobiales</taxon>
        <taxon>Brucellaceae</taxon>
        <taxon>Brucella/Ochrobactrum group</taxon>
        <taxon>Brucella</taxon>
    </lineage>
</organism>